<organism>
    <name type="scientific">Escherichia coli (strain K12)</name>
    <dbReference type="NCBI Taxonomy" id="83333"/>
    <lineage>
        <taxon>Bacteria</taxon>
        <taxon>Pseudomonadati</taxon>
        <taxon>Pseudomonadota</taxon>
        <taxon>Gammaproteobacteria</taxon>
        <taxon>Enterobacterales</taxon>
        <taxon>Enterobacteriaceae</taxon>
        <taxon>Escherichia</taxon>
    </lineage>
</organism>
<protein>
    <recommendedName>
        <fullName evidence="11">Replicative helicase loader DnaC</fullName>
        <ecNumber evidence="6">3.6.4.-</ecNumber>
    </recommendedName>
    <alternativeName>
        <fullName>DNA replication protein DnaC</fullName>
    </alternativeName>
</protein>
<sequence length="245" mass="27935">MKNVGDLMQRLQKMMPAHIKPAFKTGEELLAWQKEQGAIRSAALERENRAMKMQRTFNRSGIRPLHQNCSFENYRVECEGQMNALSKARQYVEEFDGNIASFIFSGKPGTGKNHLAAAICNELLLRGKSVLIITVADIMSAMKDTFRNSGTSEEQLLNDLSNVDLLVIDEIGVQTESKYEKVIINQIVDRRSSSKRPTGMLTNSNMEEMTKLLGERVMDRMRLGNSLWVIFNWDSYRSRVTGKEY</sequence>
<name>DNAC_ECOLI</name>
<accession>P0AEF0</accession>
<accession>P07905</accession>
<accession>Q2M5V5</accession>
<dbReference type="EC" id="3.6.4.-" evidence="6"/>
<dbReference type="EMBL" id="J04030">
    <property type="protein sequence ID" value="AAA23700.1"/>
    <property type="molecule type" value="Genomic_DNA"/>
</dbReference>
<dbReference type="EMBL" id="U14003">
    <property type="protein sequence ID" value="AAA97260.1"/>
    <property type="molecule type" value="Genomic_DNA"/>
</dbReference>
<dbReference type="EMBL" id="U00096">
    <property type="protein sequence ID" value="AAC77317.1"/>
    <property type="molecule type" value="Genomic_DNA"/>
</dbReference>
<dbReference type="EMBL" id="AP009048">
    <property type="protein sequence ID" value="BAE78351.1"/>
    <property type="molecule type" value="Genomic_DNA"/>
</dbReference>
<dbReference type="PIR" id="A28484">
    <property type="entry name" value="XMECNC"/>
</dbReference>
<dbReference type="RefSeq" id="NP_418781.1">
    <property type="nucleotide sequence ID" value="NC_000913.3"/>
</dbReference>
<dbReference type="RefSeq" id="WP_000799911.1">
    <property type="nucleotide sequence ID" value="NZ_STEB01000025.1"/>
</dbReference>
<dbReference type="PDB" id="6KZA">
    <property type="method" value="X-ray"/>
    <property type="resolution" value="3.10 A"/>
    <property type="chains" value="C/D=1-56"/>
</dbReference>
<dbReference type="PDB" id="6QEL">
    <property type="method" value="EM"/>
    <property type="resolution" value="3.90 A"/>
    <property type="chains" value="G/H/I/J/K/L=1-245"/>
</dbReference>
<dbReference type="PDB" id="6QEM">
    <property type="method" value="EM"/>
    <property type="resolution" value="3.40 A"/>
    <property type="chains" value="G/H/I/J/K/L=1-245"/>
</dbReference>
<dbReference type="PDBsum" id="6KZA"/>
<dbReference type="PDBsum" id="6QEL"/>
<dbReference type="PDBsum" id="6QEM"/>
<dbReference type="EMDB" id="EMD-2321"/>
<dbReference type="EMDB" id="EMD-4538"/>
<dbReference type="SMR" id="P0AEF0"/>
<dbReference type="BioGRID" id="4262755">
    <property type="interactions" value="20"/>
</dbReference>
<dbReference type="BioGRID" id="853143">
    <property type="interactions" value="1"/>
</dbReference>
<dbReference type="ComplexPortal" id="CPX-1934">
    <property type="entry name" value="dnaB-dnaC complex"/>
</dbReference>
<dbReference type="ComplexPortal" id="CPX-1950">
    <property type="entry name" value="dnaA-dnaB-dnaC loader complex"/>
</dbReference>
<dbReference type="ComplexPortal" id="CPX-1951">
    <property type="entry name" value="Replication restart pre-primosome complex, priAB variant"/>
</dbReference>
<dbReference type="ComplexPortal" id="CPX-1952">
    <property type="entry name" value="Replication restart pre-primosome complex, priAC variant"/>
</dbReference>
<dbReference type="ComplexPortal" id="CPX-1953">
    <property type="entry name" value="Replication restart pre-primosome complex priC-rep variant"/>
</dbReference>
<dbReference type="ComplexPortal" id="CPX-5909">
    <property type="entry name" value="Replication restart primosome complex, priAC variant"/>
</dbReference>
<dbReference type="ComplexPortal" id="CPX-5910">
    <property type="entry name" value="Replication restart primosome complex, priAB variant"/>
</dbReference>
<dbReference type="ComplexPortal" id="CPX-5911">
    <property type="entry name" value="Replication restart primosome complex, priC-rep variant"/>
</dbReference>
<dbReference type="DIP" id="DIP-9457N"/>
<dbReference type="FunCoup" id="P0AEF0">
    <property type="interactions" value="97"/>
</dbReference>
<dbReference type="IntAct" id="P0AEF0">
    <property type="interactions" value="13"/>
</dbReference>
<dbReference type="STRING" id="511145.b4361"/>
<dbReference type="jPOST" id="P0AEF0"/>
<dbReference type="PaxDb" id="511145-b4361"/>
<dbReference type="EnsemblBacteria" id="AAC77317">
    <property type="protein sequence ID" value="AAC77317"/>
    <property type="gene ID" value="b4361"/>
</dbReference>
<dbReference type="GeneID" id="93777487"/>
<dbReference type="GeneID" id="948864"/>
<dbReference type="KEGG" id="ecj:JW4325"/>
<dbReference type="KEGG" id="eco:b4361"/>
<dbReference type="KEGG" id="ecoc:C3026_23560"/>
<dbReference type="PATRIC" id="fig|1411691.4.peg.2325"/>
<dbReference type="EchoBASE" id="EB0233"/>
<dbReference type="eggNOG" id="COG1484">
    <property type="taxonomic scope" value="Bacteria"/>
</dbReference>
<dbReference type="HOGENOM" id="CLU_062999_3_1_6"/>
<dbReference type="InParanoid" id="P0AEF0"/>
<dbReference type="OMA" id="DTFGNRE"/>
<dbReference type="OrthoDB" id="5956003at2"/>
<dbReference type="PhylomeDB" id="P0AEF0"/>
<dbReference type="BioCyc" id="EcoCyc:EG10237-MONOMER"/>
<dbReference type="PRO" id="PR:P0AEF0"/>
<dbReference type="Proteomes" id="UP000000625">
    <property type="component" value="Chromosome"/>
</dbReference>
<dbReference type="GO" id="GO:1990100">
    <property type="term" value="C:DnaB-DnaC complex"/>
    <property type="evidence" value="ECO:0000353"/>
    <property type="project" value="ComplexPortal"/>
</dbReference>
<dbReference type="GO" id="GO:1990158">
    <property type="term" value="C:DnaB-DnaC-DnaT-PriA-PriB complex"/>
    <property type="evidence" value="ECO:0000303"/>
    <property type="project" value="ComplexPortal"/>
</dbReference>
<dbReference type="GO" id="GO:1990159">
    <property type="term" value="C:DnaB-DnaC-DnaT-PriA-PriC complex"/>
    <property type="evidence" value="ECO:0000303"/>
    <property type="project" value="ComplexPortal"/>
</dbReference>
<dbReference type="GO" id="GO:1990160">
    <property type="term" value="C:DnaB-DnaC-Rep-PriC complex"/>
    <property type="evidence" value="ECO:0000303"/>
    <property type="project" value="ComplexPortal"/>
</dbReference>
<dbReference type="GO" id="GO:1990077">
    <property type="term" value="C:primosome complex"/>
    <property type="evidence" value="ECO:0000303"/>
    <property type="project" value="ComplexPortal"/>
</dbReference>
<dbReference type="GO" id="GO:0005524">
    <property type="term" value="F:ATP binding"/>
    <property type="evidence" value="ECO:0007669"/>
    <property type="project" value="UniProtKB-KW"/>
</dbReference>
<dbReference type="GO" id="GO:0016887">
    <property type="term" value="F:ATP hydrolysis activity"/>
    <property type="evidence" value="ECO:0007669"/>
    <property type="project" value="InterPro"/>
</dbReference>
<dbReference type="GO" id="GO:0003677">
    <property type="term" value="F:DNA binding"/>
    <property type="evidence" value="ECO:0007669"/>
    <property type="project" value="UniProtKB-KW"/>
</dbReference>
<dbReference type="GO" id="GO:0006260">
    <property type="term" value="P:DNA replication"/>
    <property type="evidence" value="ECO:0000318"/>
    <property type="project" value="GO_Central"/>
</dbReference>
<dbReference type="GO" id="GO:0006270">
    <property type="term" value="P:DNA replication initiation"/>
    <property type="evidence" value="ECO:0000314"/>
    <property type="project" value="ComplexPortal"/>
</dbReference>
<dbReference type="GO" id="GO:0006269">
    <property type="term" value="P:DNA replication, synthesis of primer"/>
    <property type="evidence" value="ECO:0000303"/>
    <property type="project" value="ComplexPortal"/>
</dbReference>
<dbReference type="GO" id="GO:0006271">
    <property type="term" value="P:DNA strand elongation involved in DNA replication"/>
    <property type="evidence" value="ECO:0000316"/>
    <property type="project" value="EcoCyc"/>
</dbReference>
<dbReference type="GO" id="GO:0031297">
    <property type="term" value="P:replication fork processing"/>
    <property type="evidence" value="ECO:0000303"/>
    <property type="project" value="ComplexPortal"/>
</dbReference>
<dbReference type="CDD" id="cd00009">
    <property type="entry name" value="AAA"/>
    <property type="match status" value="1"/>
</dbReference>
<dbReference type="FunFam" id="3.40.50.300:FF:000266">
    <property type="entry name" value="DNA replication protein DnaC"/>
    <property type="match status" value="1"/>
</dbReference>
<dbReference type="Gene3D" id="3.40.50.300">
    <property type="entry name" value="P-loop containing nucleotide triphosphate hydrolases"/>
    <property type="match status" value="1"/>
</dbReference>
<dbReference type="InterPro" id="IPR003593">
    <property type="entry name" value="AAA+_ATPase"/>
</dbReference>
<dbReference type="InterPro" id="IPR028350">
    <property type="entry name" value="DNAC/IstB-like"/>
</dbReference>
<dbReference type="InterPro" id="IPR002611">
    <property type="entry name" value="IstB_ATP-bd"/>
</dbReference>
<dbReference type="InterPro" id="IPR027417">
    <property type="entry name" value="P-loop_NTPase"/>
</dbReference>
<dbReference type="NCBIfam" id="NF005931">
    <property type="entry name" value="PRK07952.1"/>
    <property type="match status" value="1"/>
</dbReference>
<dbReference type="PANTHER" id="PTHR30050">
    <property type="entry name" value="CHROMOSOMAL REPLICATION INITIATOR PROTEIN DNAA"/>
    <property type="match status" value="1"/>
</dbReference>
<dbReference type="PANTHER" id="PTHR30050:SF9">
    <property type="entry name" value="DNA REPLICATION PROTEIN DNAC"/>
    <property type="match status" value="1"/>
</dbReference>
<dbReference type="Pfam" id="PF01695">
    <property type="entry name" value="IstB_IS21"/>
    <property type="match status" value="1"/>
</dbReference>
<dbReference type="PIRSF" id="PIRSF003073">
    <property type="entry name" value="DNAC_TnpB_IstB"/>
    <property type="match status" value="1"/>
</dbReference>
<dbReference type="SMART" id="SM00382">
    <property type="entry name" value="AAA"/>
    <property type="match status" value="1"/>
</dbReference>
<dbReference type="SUPFAM" id="SSF52540">
    <property type="entry name" value="P-loop containing nucleoside triphosphate hydrolases"/>
    <property type="match status" value="1"/>
</dbReference>
<feature type="chain" id="PRO_0000079954" description="Replicative helicase loader DnaC">
    <location>
        <begin position="1"/>
        <end position="245"/>
    </location>
</feature>
<feature type="site" description="Probably involved in interaction with DnaB protein" evidence="13">
    <location>
        <position position="69"/>
    </location>
</feature>
<feature type="mutagenesis site" description="Decreased ability to restore DNA replication and growth in mutant dnaB252." evidence="7">
    <original>C</original>
    <variation>S</variation>
    <location>
        <position position="69"/>
    </location>
</feature>
<feature type="mutagenesis site" description="Loss of DnaC's DnaB- and ssDNA-stimulated ATPase activity." evidence="6">
    <original>K</original>
    <variation>R</variation>
    <location>
        <position position="112"/>
    </location>
</feature>
<feature type="mutagenesis site" description="Loss of DnaC ATPase activity, decreased ssDNA binding, decreased DnaB loading on ssDNA." evidence="6">
    <original>F</original>
    <variation>A</variation>
    <location>
        <position position="146"/>
    </location>
</feature>
<feature type="mutagenesis site" description="In dnaC809,820; almost completely suppresses single priA deletion, priB-priC double deletion, triple priA-priB-priC deletion, multi-mutant cells grow normally, have slightly increased SOS induction and somewhat decreased recombination. Suppresses lethality of double priA-rep and double priA-priC deletion mutants." evidence="1 2">
    <original>ESK</original>
    <variation>GSN</variation>
    <location>
        <begin position="176"/>
        <end position="178"/>
    </location>
</feature>
<feature type="mutagenesis site" description="In dnaC809; partially suppresses a priB-priC double deletion these mutant cells resemble priA deletion, grow slowly, have high SOS induction, 5-fold decreased recombination. priA-priB-priC-dnaC809 cells are just barely viable. Suppresses a dnaT mutation that phenocopies a priA deletion. Suppresses slow growth phenotype of a priA deletion. Does not suppress double priA-rep or double priA-priC deletion mutants." evidence="1 2 3 5">
    <original>E</original>
    <variation>G</variation>
    <location>
        <position position="176"/>
    </location>
</feature>
<feature type="mutagenesis site" description="Loss of DnaC ATPase activity, decreased ssDNA binding, decreased DnaB loading on ssDNA." evidence="6">
    <original>S</original>
    <variation>D</variation>
    <location>
        <position position="177"/>
    </location>
</feature>
<feature type="mutagenesis site" description="In dnaC820; suppresses the slow growth phenotype of a double priB-priC deletion plus dnaC809 mutation." evidence="1">
    <original>K</original>
    <variation>N</variation>
    <location>
        <position position="178"/>
    </location>
</feature>
<feature type="mutagenesis site" description="Loss of DnaC ATPase activity, decreased ssDNA binding, decreased DnaB loading on ssDNA." evidence="6">
    <original>Y</original>
    <variation>A</variation>
    <location>
        <position position="179"/>
    </location>
</feature>
<feature type="sequence conflict" description="In Ref. 1; AA sequence." evidence="12" ref="1">
    <original>D</original>
    <variation>A</variation>
    <location>
        <position position="6"/>
    </location>
</feature>
<feature type="helix" evidence="16">
    <location>
        <begin position="5"/>
        <end position="13"/>
    </location>
</feature>
<feature type="helix" evidence="16">
    <location>
        <begin position="26"/>
        <end position="49"/>
    </location>
</feature>
<feature type="strand" evidence="17">
    <location>
        <begin position="57"/>
        <end position="59"/>
    </location>
</feature>
<feature type="helix" evidence="17">
    <location>
        <begin position="64"/>
        <end position="66"/>
    </location>
</feature>
<feature type="helix" evidence="17">
    <location>
        <begin position="79"/>
        <end position="93"/>
    </location>
</feature>
<feature type="strand" evidence="17">
    <location>
        <begin position="102"/>
        <end position="106"/>
    </location>
</feature>
<feature type="strand" evidence="17">
    <location>
        <begin position="108"/>
        <end position="111"/>
    </location>
</feature>
<feature type="helix" evidence="17">
    <location>
        <begin position="112"/>
        <end position="126"/>
    </location>
</feature>
<feature type="strand" evidence="17">
    <location>
        <begin position="130"/>
        <end position="134"/>
    </location>
</feature>
<feature type="helix" evidence="17">
    <location>
        <begin position="135"/>
        <end position="147"/>
    </location>
</feature>
<feature type="helix" evidence="17">
    <location>
        <begin position="153"/>
        <end position="161"/>
    </location>
</feature>
<feature type="strand" evidence="17">
    <location>
        <begin position="163"/>
        <end position="170"/>
    </location>
</feature>
<feature type="helix" evidence="17">
    <location>
        <begin position="178"/>
        <end position="192"/>
    </location>
</feature>
<feature type="turn" evidence="17">
    <location>
        <begin position="193"/>
        <end position="195"/>
    </location>
</feature>
<feature type="strand" evidence="17">
    <location>
        <begin position="199"/>
        <end position="201"/>
    </location>
</feature>
<feature type="helix" evidence="17">
    <location>
        <begin position="206"/>
        <end position="210"/>
    </location>
</feature>
<feature type="helix" evidence="17">
    <location>
        <begin position="215"/>
        <end position="221"/>
    </location>
</feature>
<feature type="strand" evidence="17">
    <location>
        <begin position="228"/>
        <end position="230"/>
    </location>
</feature>
<feature type="helix" evidence="17">
    <location>
        <begin position="236"/>
        <end position="238"/>
    </location>
</feature>
<comment type="function">
    <text evidence="1 6 8 9 10">Required to load the replicative helix DnaB onto single-stranded (ss)DNA, to initiate chromosomal replication (PubMed:30797687). Also loads the DnaB in the replication restart primosome (composed of PriA, PriB, PriC, DnaB and DnaT; DnaG primase associates transiently with this complex) (PubMed:6454139, PubMed:8663104, PubMed:8663105). DnaC alters the inter-domain and inter-subunit interactions of DnaB, inducing an open ring conformation that allows ssDNA to access the interior of the DnaB(6):DnaC(6) ring (PubMed:30797687). Has ATPase activity only in the presence of DnaB and ssDNA (PubMed:30797687). ssDNA binds to the central pore in the DnaB(6):DnaC(6) complex, making contacts with both subunits (PubMed:30797687). Mutations in this protein can bypass the need for PriA recognition of collapsed replication fork substrates in order to load DnaB onto recombinational intermediates in vivo (PubMed:10540288).</text>
</comment>
<comment type="catalytic activity">
    <reaction evidence="6">
        <text>ATP + H2O = ADP + phosphate + H(+)</text>
        <dbReference type="Rhea" id="RHEA:13065"/>
        <dbReference type="ChEBI" id="CHEBI:15377"/>
        <dbReference type="ChEBI" id="CHEBI:15378"/>
        <dbReference type="ChEBI" id="CHEBI:30616"/>
        <dbReference type="ChEBI" id="CHEBI:43474"/>
        <dbReference type="ChEBI" id="CHEBI:456216"/>
    </reaction>
    <physiologicalReaction direction="left-to-right" evidence="6">
        <dbReference type="Rhea" id="RHEA:13066"/>
    </physiologicalReaction>
</comment>
<comment type="subunit">
    <text evidence="6 8">The helix loader is a DnaB(6):DnaC(6) complex with a crack opening large enough to allow ssDNA into the central cavity (PubMed:30797687). Can occasionally be detected as a component of the replication restart primosome, which is composed of PriA, PriB, PriC, DnaB and DnaT (PubMed:6454139).</text>
</comment>
<comment type="interaction">
    <interactant intactId="EBI-549012">
        <id>P0AEF0</id>
    </interactant>
    <interactant intactId="EBI-548978">
        <id>P0ACB0</id>
        <label>dnaB</label>
    </interactant>
    <organismsDiffer>false</organismsDiffer>
    <experiments>12</experiments>
</comment>
<comment type="induction">
    <text evidence="4">Induced by hydroxyurea (PubMed:20005847).</text>
</comment>
<comment type="similarity">
    <text evidence="12">Belongs to the DnaC family.</text>
</comment>
<keyword id="KW-0002">3D-structure</keyword>
<keyword id="KW-0067">ATP-binding</keyword>
<keyword id="KW-0903">Direct protein sequencing</keyword>
<keyword id="KW-0235">DNA replication</keyword>
<keyword id="KW-0238">DNA-binding</keyword>
<keyword id="KW-0378">Hydrolase</keyword>
<keyword id="KW-0547">Nucleotide-binding</keyword>
<keyword id="KW-0639">Primosome</keyword>
<keyword id="KW-1185">Reference proteome</keyword>
<reference key="1">
    <citation type="journal article" date="1987" name="J. Biol. Chem.">
        <title>Structure of Escherichia coli dnaC. Identification of a cysteine residue possibly involved in association with dnaB protein.</title>
        <authorList>
            <person name="Nakayama N."/>
            <person name="Bond M.W."/>
            <person name="Miyajima A."/>
            <person name="Kobori J."/>
            <person name="Arai K."/>
        </authorList>
    </citation>
    <scope>NUCLEOTIDE SEQUENCE [GENOMIC DNA]</scope>
    <scope>PROTEIN SEQUENCE OF 1-68; 83-85; 143-147; 201-203; 210-214 AND 222-225</scope>
    <scope>MUTAGENESIS OF CYS-69</scope>
    <source>
        <strain>K12</strain>
    </source>
</reference>
<reference key="2">
    <citation type="journal article" date="1988" name="J. Biol. Chem.">
        <title>Operon structure of dnaT and dnaC genes essential for normal and stable DNA replication of Escherichia coli chromosome.</title>
        <authorList>
            <person name="Masai H."/>
            <person name="Arai K."/>
        </authorList>
    </citation>
    <scope>NUCLEOTIDE SEQUENCE [GENOMIC DNA]</scope>
    <source>
        <strain>K12</strain>
    </source>
</reference>
<reference key="3">
    <citation type="journal article" date="1995" name="Nucleic Acids Res.">
        <title>Analysis of the Escherichia coli genome VI: DNA sequence of the region from 92.8 through 100 minutes.</title>
        <authorList>
            <person name="Burland V.D."/>
            <person name="Plunkett G. III"/>
            <person name="Sofia H.J."/>
            <person name="Daniels D.L."/>
            <person name="Blattner F.R."/>
        </authorList>
    </citation>
    <scope>NUCLEOTIDE SEQUENCE [LARGE SCALE GENOMIC DNA]</scope>
    <source>
        <strain>K12 / MG1655 / ATCC 47076</strain>
    </source>
</reference>
<reference key="4">
    <citation type="journal article" date="1997" name="Science">
        <title>The complete genome sequence of Escherichia coli K-12.</title>
        <authorList>
            <person name="Blattner F.R."/>
            <person name="Plunkett G. III"/>
            <person name="Bloch C.A."/>
            <person name="Perna N.T."/>
            <person name="Burland V."/>
            <person name="Riley M."/>
            <person name="Collado-Vides J."/>
            <person name="Glasner J.D."/>
            <person name="Rode C.K."/>
            <person name="Mayhew G.F."/>
            <person name="Gregor J."/>
            <person name="Davis N.W."/>
            <person name="Kirkpatrick H.A."/>
            <person name="Goeden M.A."/>
            <person name="Rose D.J."/>
            <person name="Mau B."/>
            <person name="Shao Y."/>
        </authorList>
    </citation>
    <scope>NUCLEOTIDE SEQUENCE [LARGE SCALE GENOMIC DNA]</scope>
    <source>
        <strain>K12 / MG1655 / ATCC 47076</strain>
    </source>
</reference>
<reference key="5">
    <citation type="journal article" date="2006" name="Mol. Syst. Biol.">
        <title>Highly accurate genome sequences of Escherichia coli K-12 strains MG1655 and W3110.</title>
        <authorList>
            <person name="Hayashi K."/>
            <person name="Morooka N."/>
            <person name="Yamamoto Y."/>
            <person name="Fujita K."/>
            <person name="Isono K."/>
            <person name="Choi S."/>
            <person name="Ohtsubo E."/>
            <person name="Baba T."/>
            <person name="Wanner B.L."/>
            <person name="Mori H."/>
            <person name="Horiuchi T."/>
        </authorList>
    </citation>
    <scope>NUCLEOTIDE SEQUENCE [LARGE SCALE GENOMIC DNA]</scope>
    <source>
        <strain>K12 / W3110 / ATCC 27325 / DSM 5911</strain>
    </source>
</reference>
<reference key="6">
    <citation type="journal article" date="1986" name="Proc. Natl. Acad. Sci. U.S.A.">
        <title>Cloning of the Escherichia coli gene for primosomal protein I: the relationship to dnaT, essential for chromosomal DNA replication.</title>
        <authorList>
            <person name="Masai H."/>
            <person name="Bond M.W."/>
            <person name="Arai K."/>
        </authorList>
    </citation>
    <scope>NUCLEOTIDE SEQUENCE [GENOMIC DNA] OF 1-14</scope>
    <source>
        <strain>K12</strain>
    </source>
</reference>
<reference key="7">
    <citation type="journal article" date="1981" name="Proc. Natl. Acad. Sci. U.S.A.">
        <title>Unique primed start of phage phi X174 DNA replication and mobility of the primosome in a direction opposite chain synthesis.</title>
        <authorList>
            <person name="Arai K."/>
            <person name="Kornberg A."/>
        </authorList>
    </citation>
    <scope>FUNCTION</scope>
    <scope>PRIMOSOME SUBUNITS</scope>
</reference>
<reference key="8">
    <citation type="journal article" date="1996" name="J. Biol. Chem.">
        <title>The ordered assembly of the phiX174-type primosome. I. Isolation and identification of intermediate protein-DNA complexes.</title>
        <authorList>
            <person name="Ng J.Y."/>
            <person name="Marians K.J."/>
        </authorList>
    </citation>
    <scope>FUNCTION</scope>
    <scope>PRIMOSOME COMPLEX ASSEMBLY</scope>
</reference>
<reference key="9">
    <citation type="journal article" date="1996" name="J. Biol. Chem.">
        <title>The ordered assembly of the phiX174-type primosome. II. Preservation of primosome composition from assembly through replication.</title>
        <authorList>
            <person name="Ng J.Y."/>
            <person name="Marians K.J."/>
        </authorList>
    </citation>
    <scope>FUNCTION</scope>
    <scope>PRIMOSOME COMPLEX ASSEMBLY</scope>
</reference>
<reference key="10">
    <citation type="journal article" date="1997" name="Electrophoresis">
        <title>Escherichia coli proteome analysis using the gene-protein database.</title>
        <authorList>
            <person name="VanBogelen R.A."/>
            <person name="Abshire K.Z."/>
            <person name="Moldover B."/>
            <person name="Olson E.R."/>
            <person name="Neidhardt F.C."/>
        </authorList>
    </citation>
    <scope>IDENTIFICATION BY 2D-GEL</scope>
</reference>
<reference key="11">
    <citation type="journal article" date="1999" name="Mol. Microbiol.">
        <title>dnaC mutations suppress defects in DNA replication- and recombination-associated functions in priB and priC double mutants in Escherichia coli K-12.</title>
        <authorList>
            <person name="Sandler S.J."/>
            <person name="Marians K.J."/>
            <person name="Zavitz K.H."/>
            <person name="Coutu J."/>
            <person name="Parent M.A."/>
            <person name="Clark A.J."/>
        </authorList>
    </citation>
    <scope>FUNCTION</scope>
    <scope>MUTAGENESIS OF 176-GLU--LYS-178; GLU-176 AND LYS-178</scope>
    <source>
        <strain>K12</strain>
    </source>
</reference>
<reference key="12">
    <citation type="journal article" date="2000" name="Genetics">
        <title>Multiple genetic pathways for restarting DNA replication forks in Escherichia coli K-12.</title>
        <authorList>
            <person name="Sandler S.J."/>
        </authorList>
    </citation>
    <scope>MUTAGENESIS OF 176-GLU--LYS-178 AND GLU-176</scope>
    <source>
        <strain>K12</strain>
    </source>
</reference>
<reference key="13">
    <citation type="journal article" date="2004" name="Genetics">
        <title>A dnaT mutant with phenotypes similar to those of a priA2::kan mutant in Escherichia coli K-12.</title>
        <authorList>
            <person name="McCool J.D."/>
            <person name="Ford C.C."/>
            <person name="Sandler S.J."/>
        </authorList>
    </citation>
    <scope>MUTAGENESIS OF GLU-176</scope>
    <source>
        <strain>K12 / DM4000</strain>
    </source>
</reference>
<reference key="14">
    <citation type="journal article" date="2009" name="Mol. Cell">
        <title>Hydroxyurea induces hydroxyl radical-mediated cell death in Escherichia coli.</title>
        <authorList>
            <person name="Davies B.W."/>
            <person name="Kohanski M.A."/>
            <person name="Simmons L.A."/>
            <person name="Winkler J.A."/>
            <person name="Collins J.J."/>
            <person name="Walker G.C."/>
        </authorList>
    </citation>
    <scope>INDUCTION BY HYDROXYUREA</scope>
    <source>
        <strain>K12 / MC4100 / ATCC 35695 / DSM 6574</strain>
    </source>
</reference>
<reference key="15">
    <citation type="journal article" date="2012" name="J. Bacteriol.">
        <title>Cellular characterization of the primosome and rep helicase in processing and restoration of replication following arrest by UV-induced DNA damage in Escherichia coli.</title>
        <authorList>
            <person name="Courcelle C.T."/>
            <person name="Landstrom A.J."/>
            <person name="Anderson B."/>
            <person name="Courcelle J."/>
        </authorList>
    </citation>
    <scope>MUTAGENESIS OF GLU-176</scope>
    <source>
        <strain>K12</strain>
    </source>
</reference>
<reference evidence="14 15" key="16">
    <citation type="journal article" date="2019" name="Mol. Cell">
        <title>Physical Basis for the Loading of a Bacterial Replicative Helicase onto DNA.</title>
        <authorList>
            <person name="Arias-Palomo E."/>
            <person name="Puri N."/>
            <person name="O'Shea Murray V.L."/>
            <person name="Yan Q."/>
            <person name="Berger J.M."/>
        </authorList>
    </citation>
    <scope>STRUCTURE BY ELECTRON MICROSCOPY (3.40 ANGSTROMS) IN COMPLEX WITH DNAB AND ATP ANALOG WITH AND WITHOUT SSDNA</scope>
    <scope>FUNCTION AS AN ATPASE</scope>
    <scope>SUBUNIT</scope>
    <scope>ATP-BINDING</scope>
    <scope>SSDNA-BINDING</scope>
    <scope>MUTAGENESIS OF LYS-112; PHE-146; SER-177 AND TYR-179</scope>
</reference>
<proteinExistence type="evidence at protein level"/>
<gene>
    <name type="primary">dnaC</name>
    <name type="synonym">dnaD</name>
    <name type="ordered locus">b4361</name>
    <name type="ordered locus">JW4325</name>
</gene>
<evidence type="ECO:0000269" key="1">
    <source>
    </source>
</evidence>
<evidence type="ECO:0000269" key="2">
    <source>
    </source>
</evidence>
<evidence type="ECO:0000269" key="3">
    <source>
    </source>
</evidence>
<evidence type="ECO:0000269" key="4">
    <source>
    </source>
</evidence>
<evidence type="ECO:0000269" key="5">
    <source>
    </source>
</evidence>
<evidence type="ECO:0000269" key="6">
    <source>
    </source>
</evidence>
<evidence type="ECO:0000269" key="7">
    <source>
    </source>
</evidence>
<evidence type="ECO:0000269" key="8">
    <source>
    </source>
</evidence>
<evidence type="ECO:0000269" key="9">
    <source>
    </source>
</evidence>
<evidence type="ECO:0000269" key="10">
    <source>
    </source>
</evidence>
<evidence type="ECO:0000303" key="11">
    <source>
    </source>
</evidence>
<evidence type="ECO:0000305" key="12"/>
<evidence type="ECO:0000305" key="13">
    <source>
    </source>
</evidence>
<evidence type="ECO:0007744" key="14">
    <source>
        <dbReference type="PDB" id="6QEL"/>
    </source>
</evidence>
<evidence type="ECO:0007744" key="15">
    <source>
        <dbReference type="PDB" id="6QEM"/>
    </source>
</evidence>
<evidence type="ECO:0007829" key="16">
    <source>
        <dbReference type="PDB" id="6KZA"/>
    </source>
</evidence>
<evidence type="ECO:0007829" key="17">
    <source>
        <dbReference type="PDB" id="6QEM"/>
    </source>
</evidence>